<name>SSRP_RUEPO</name>
<sequence length="158" mass="18259">MAKKISDPNYKVIAENRRARFDYAIESDLECGIMLEGSEVKALRGGGSNIADSYAAVENGELWLVNAYIPPYEQAKMFKHEERRRRKLLVSRKELANLWNATQRKGMTLVPLVLYFNHKGIAKMKLGIAKGKKIHDKRETEAKRDWNRQKQRLLKDNA</sequence>
<accession>Q5LLW5</accession>
<feature type="chain" id="PRO_0000103026" description="SsrA-binding protein">
    <location>
        <begin position="1"/>
        <end position="158"/>
    </location>
</feature>
<feature type="region of interest" description="Disordered" evidence="2">
    <location>
        <begin position="133"/>
        <end position="158"/>
    </location>
</feature>
<feature type="compositionally biased region" description="Basic and acidic residues" evidence="2">
    <location>
        <begin position="136"/>
        <end position="158"/>
    </location>
</feature>
<proteinExistence type="inferred from homology"/>
<keyword id="KW-0963">Cytoplasm</keyword>
<keyword id="KW-1185">Reference proteome</keyword>
<keyword id="KW-0694">RNA-binding</keyword>
<evidence type="ECO:0000255" key="1">
    <source>
        <dbReference type="HAMAP-Rule" id="MF_00023"/>
    </source>
</evidence>
<evidence type="ECO:0000256" key="2">
    <source>
        <dbReference type="SAM" id="MobiDB-lite"/>
    </source>
</evidence>
<comment type="function">
    <text evidence="1">Required for rescue of stalled ribosomes mediated by trans-translation. Binds to transfer-messenger RNA (tmRNA), required for stable association of tmRNA with ribosomes. tmRNA and SmpB together mimic tRNA shape, replacing the anticodon stem-loop with SmpB. tmRNA is encoded by the ssrA gene; the 2 termini fold to resemble tRNA(Ala) and it encodes a 'tag peptide', a short internal open reading frame. During trans-translation Ala-aminoacylated tmRNA acts like a tRNA, entering the A-site of stalled ribosomes, displacing the stalled mRNA. The ribosome then switches to translate the ORF on the tmRNA; the nascent peptide is terminated with the 'tag peptide' encoded by the tmRNA and targeted for degradation. The ribosome is freed to recommence translation, which seems to be the essential function of trans-translation.</text>
</comment>
<comment type="subcellular location">
    <subcellularLocation>
        <location evidence="1">Cytoplasm</location>
    </subcellularLocation>
    <text evidence="1">The tmRNA-SmpB complex associates with stalled 70S ribosomes.</text>
</comment>
<comment type="similarity">
    <text evidence="1">Belongs to the SmpB family.</text>
</comment>
<organism>
    <name type="scientific">Ruegeria pomeroyi (strain ATCC 700808 / DSM 15171 / DSS-3)</name>
    <name type="common">Silicibacter pomeroyi</name>
    <dbReference type="NCBI Taxonomy" id="246200"/>
    <lineage>
        <taxon>Bacteria</taxon>
        <taxon>Pseudomonadati</taxon>
        <taxon>Pseudomonadota</taxon>
        <taxon>Alphaproteobacteria</taxon>
        <taxon>Rhodobacterales</taxon>
        <taxon>Roseobacteraceae</taxon>
        <taxon>Ruegeria</taxon>
    </lineage>
</organism>
<dbReference type="EMBL" id="CP000031">
    <property type="protein sequence ID" value="AAV97020.1"/>
    <property type="molecule type" value="Genomic_DNA"/>
</dbReference>
<dbReference type="RefSeq" id="WP_011049478.1">
    <property type="nucleotide sequence ID" value="NC_003911.12"/>
</dbReference>
<dbReference type="SMR" id="Q5LLW5"/>
<dbReference type="STRING" id="246200.SPO3806"/>
<dbReference type="PaxDb" id="246200-SPO3806"/>
<dbReference type="KEGG" id="sil:SPO3806"/>
<dbReference type="eggNOG" id="COG0691">
    <property type="taxonomic scope" value="Bacteria"/>
</dbReference>
<dbReference type="HOGENOM" id="CLU_108953_0_1_5"/>
<dbReference type="OrthoDB" id="9805462at2"/>
<dbReference type="Proteomes" id="UP000001023">
    <property type="component" value="Chromosome"/>
</dbReference>
<dbReference type="GO" id="GO:0005829">
    <property type="term" value="C:cytosol"/>
    <property type="evidence" value="ECO:0007669"/>
    <property type="project" value="TreeGrafter"/>
</dbReference>
<dbReference type="GO" id="GO:0003723">
    <property type="term" value="F:RNA binding"/>
    <property type="evidence" value="ECO:0007669"/>
    <property type="project" value="UniProtKB-UniRule"/>
</dbReference>
<dbReference type="GO" id="GO:0070929">
    <property type="term" value="P:trans-translation"/>
    <property type="evidence" value="ECO:0007669"/>
    <property type="project" value="UniProtKB-UniRule"/>
</dbReference>
<dbReference type="CDD" id="cd09294">
    <property type="entry name" value="SmpB"/>
    <property type="match status" value="1"/>
</dbReference>
<dbReference type="Gene3D" id="2.40.280.10">
    <property type="match status" value="1"/>
</dbReference>
<dbReference type="HAMAP" id="MF_00023">
    <property type="entry name" value="SmpB"/>
    <property type="match status" value="1"/>
</dbReference>
<dbReference type="InterPro" id="IPR023620">
    <property type="entry name" value="SmpB"/>
</dbReference>
<dbReference type="InterPro" id="IPR000037">
    <property type="entry name" value="SsrA-bd_prot"/>
</dbReference>
<dbReference type="InterPro" id="IPR020081">
    <property type="entry name" value="SsrA-bd_prot_CS"/>
</dbReference>
<dbReference type="NCBIfam" id="NF003843">
    <property type="entry name" value="PRK05422.1"/>
    <property type="match status" value="1"/>
</dbReference>
<dbReference type="NCBIfam" id="TIGR00086">
    <property type="entry name" value="smpB"/>
    <property type="match status" value="1"/>
</dbReference>
<dbReference type="PANTHER" id="PTHR30308:SF2">
    <property type="entry name" value="SSRA-BINDING PROTEIN"/>
    <property type="match status" value="1"/>
</dbReference>
<dbReference type="PANTHER" id="PTHR30308">
    <property type="entry name" value="TMRNA-BINDING COMPONENT OF TRANS-TRANSLATION TAGGING COMPLEX"/>
    <property type="match status" value="1"/>
</dbReference>
<dbReference type="Pfam" id="PF01668">
    <property type="entry name" value="SmpB"/>
    <property type="match status" value="1"/>
</dbReference>
<dbReference type="SUPFAM" id="SSF74982">
    <property type="entry name" value="Small protein B (SmpB)"/>
    <property type="match status" value="1"/>
</dbReference>
<dbReference type="PROSITE" id="PS01317">
    <property type="entry name" value="SSRP"/>
    <property type="match status" value="1"/>
</dbReference>
<reference key="1">
    <citation type="journal article" date="2004" name="Nature">
        <title>Genome sequence of Silicibacter pomeroyi reveals adaptations to the marine environment.</title>
        <authorList>
            <person name="Moran M.A."/>
            <person name="Buchan A."/>
            <person name="Gonzalez J.M."/>
            <person name="Heidelberg J.F."/>
            <person name="Whitman W.B."/>
            <person name="Kiene R.P."/>
            <person name="Henriksen J.R."/>
            <person name="King G.M."/>
            <person name="Belas R."/>
            <person name="Fuqua C."/>
            <person name="Brinkac L.M."/>
            <person name="Lewis M."/>
            <person name="Johri S."/>
            <person name="Weaver B."/>
            <person name="Pai G."/>
            <person name="Eisen J.A."/>
            <person name="Rahe E."/>
            <person name="Sheldon W.M."/>
            <person name="Ye W."/>
            <person name="Miller T.R."/>
            <person name="Carlton J."/>
            <person name="Rasko D.A."/>
            <person name="Paulsen I.T."/>
            <person name="Ren Q."/>
            <person name="Daugherty S.C."/>
            <person name="DeBoy R.T."/>
            <person name="Dodson R.J."/>
            <person name="Durkin A.S."/>
            <person name="Madupu R."/>
            <person name="Nelson W.C."/>
            <person name="Sullivan S.A."/>
            <person name="Rosovitz M.J."/>
            <person name="Haft D.H."/>
            <person name="Selengut J."/>
            <person name="Ward N."/>
        </authorList>
    </citation>
    <scope>NUCLEOTIDE SEQUENCE [LARGE SCALE GENOMIC DNA]</scope>
    <source>
        <strain>ATCC 700808 / DSM 15171 / DSS-3</strain>
    </source>
</reference>
<reference key="2">
    <citation type="journal article" date="2014" name="Stand. Genomic Sci.">
        <title>An updated genome annotation for the model marine bacterium Ruegeria pomeroyi DSS-3.</title>
        <authorList>
            <person name="Rivers A.R."/>
            <person name="Smith C.B."/>
            <person name="Moran M.A."/>
        </authorList>
    </citation>
    <scope>GENOME REANNOTATION</scope>
    <source>
        <strain>ATCC 700808 / DSM 15171 / DSS-3</strain>
    </source>
</reference>
<protein>
    <recommendedName>
        <fullName evidence="1">SsrA-binding protein</fullName>
    </recommendedName>
    <alternativeName>
        <fullName evidence="1">Small protein B</fullName>
    </alternativeName>
</protein>
<gene>
    <name evidence="1" type="primary">smpB</name>
    <name type="ordered locus">SPO3806</name>
</gene>